<protein>
    <recommendedName>
        <fullName>Cathepsin L 2</fullName>
        <ecNumber>3.4.22.15</ecNumber>
    </recommendedName>
</protein>
<sequence length="314" mass="34935">MMLLGASLYLNNTQEVSDEIDTANLYANWKMKYNRRYTSQRDEMYRFKVFSDNLNYIRAFQDSTESATYTLELNQFADMSQQEFASTYLSLRVPKTAKLNASNANFQYKGAEVDWTDNKKVKYPAVKNQGSCGSCWAFSAVGALEINTDIELNKKYELSEQDLVDCSGPYDNEGCNGGWMDSAFEYVADNGLAEAKDYPYTAKDGTCKTSVKRPYTHVQGFTDIDSCDELAQAIQERTVSVAVDANPWQFYRSGVLSKCTKNLNHGVVLVGVQADGAWKIRNSWGSSWGEAGHIRLAGGDTCGICAAPSFPILG</sequence>
<feature type="signal peptide" evidence="2">
    <location>
        <begin position="1"/>
        <end position="24"/>
    </location>
</feature>
<feature type="propeptide" id="PRO_0000307837" description="Activation peptide" evidence="1">
    <location>
        <begin position="25"/>
        <end position="109"/>
    </location>
</feature>
<feature type="chain" id="PRO_0000307838" description="Cathepsin L 2">
    <location>
        <begin position="110"/>
        <end position="314"/>
    </location>
</feature>
<feature type="active site" evidence="3">
    <location>
        <position position="135"/>
    </location>
</feature>
<feature type="active site" evidence="3">
    <location>
        <position position="265"/>
    </location>
</feature>
<feature type="active site" evidence="3">
    <location>
        <position position="282"/>
    </location>
</feature>
<feature type="disulfide bond" evidence="1">
    <location>
        <begin position="132"/>
        <end position="175"/>
    </location>
</feature>
<feature type="disulfide bond" evidence="1">
    <location>
        <begin position="166"/>
        <end position="207"/>
    </location>
</feature>
<feature type="disulfide bond" evidence="1">
    <location>
        <begin position="259"/>
        <end position="302"/>
    </location>
</feature>
<comment type="function">
    <text evidence="1">May be involved in extracellular digestion.</text>
</comment>
<comment type="catalytic activity">
    <reaction>
        <text>Specificity close to that of papain. As compared to cathepsin B, cathepsin L exhibits higher activity toward protein substrates, but has little activity on Z-Arg-Arg-NHMec, and no peptidyl-dipeptidase activity.</text>
        <dbReference type="EC" id="3.4.22.15"/>
    </reaction>
</comment>
<comment type="subcellular location">
    <subcellularLocation>
        <location evidence="1">Secreted</location>
    </subcellularLocation>
</comment>
<comment type="similarity">
    <text evidence="3">Belongs to the peptidase C1 family.</text>
</comment>
<comment type="sequence caution" evidence="4">
    <conflict type="erroneous initiation">
        <sequence resource="EMBL-CDS" id="CAK89725"/>
    </conflict>
</comment>
<organism>
    <name type="scientific">Paramecium tetraurelia</name>
    <dbReference type="NCBI Taxonomy" id="5888"/>
    <lineage>
        <taxon>Eukaryota</taxon>
        <taxon>Sar</taxon>
        <taxon>Alveolata</taxon>
        <taxon>Ciliophora</taxon>
        <taxon>Intramacronucleata</taxon>
        <taxon>Oligohymenophorea</taxon>
        <taxon>Peniculida</taxon>
        <taxon>Parameciidae</taxon>
        <taxon>Paramecium</taxon>
    </lineage>
</organism>
<reference key="1">
    <citation type="journal article" date="2006" name="Nature">
        <title>Global trends of whole-genome duplications revealed by the ciliate Paramecium tetraurelia.</title>
        <authorList>
            <person name="Aury J.-M."/>
            <person name="Jaillon O."/>
            <person name="Duret L."/>
            <person name="Noel B."/>
            <person name="Jubin C."/>
            <person name="Porcel B.M."/>
            <person name="Segurens B."/>
            <person name="Daubin V."/>
            <person name="Anthouard V."/>
            <person name="Aiach N."/>
            <person name="Arnaiz O."/>
            <person name="Billaut A."/>
            <person name="Beisson J."/>
            <person name="Blanc I."/>
            <person name="Bouhouche K."/>
            <person name="Camara F."/>
            <person name="Duharcourt S."/>
            <person name="Guigo R."/>
            <person name="Gogendeau D."/>
            <person name="Katinka M."/>
            <person name="Keller A.-M."/>
            <person name="Kissmehl R."/>
            <person name="Klotz C."/>
            <person name="Koll F."/>
            <person name="Le Mouel A."/>
            <person name="Lepere G."/>
            <person name="Malinsky S."/>
            <person name="Nowacki M."/>
            <person name="Nowak J.K."/>
            <person name="Plattner H."/>
            <person name="Poulain J."/>
            <person name="Ruiz F."/>
            <person name="Serrano V."/>
            <person name="Zagulski M."/>
            <person name="Dessen P."/>
            <person name="Betermier M."/>
            <person name="Weissenbach J."/>
            <person name="Scarpelli C."/>
            <person name="Schaechter V."/>
            <person name="Sperling L."/>
            <person name="Meyer E."/>
            <person name="Cohen J."/>
            <person name="Wincker P."/>
        </authorList>
    </citation>
    <scope>NUCLEOTIDE SEQUENCE [LARGE SCALE GENOMIC DNA]</scope>
    <source>
        <strain>Stock d4-2</strain>
    </source>
</reference>
<accession>A0E358</accession>
<dbReference type="EC" id="3.4.22.15"/>
<dbReference type="EMBL" id="CT868656">
    <property type="protein sequence ID" value="CAK89725.1"/>
    <property type="status" value="ALT_INIT"/>
    <property type="molecule type" value="Genomic_DNA"/>
</dbReference>
<dbReference type="SMR" id="A0E358"/>
<dbReference type="STRING" id="5888.A0E358"/>
<dbReference type="MEROPS" id="C01.A54"/>
<dbReference type="KEGG" id="ptm:GSPATT00022898001"/>
<dbReference type="eggNOG" id="KOG1543">
    <property type="taxonomic scope" value="Eukaryota"/>
</dbReference>
<dbReference type="InParanoid" id="A0E358"/>
<dbReference type="OrthoDB" id="190265at2759"/>
<dbReference type="Proteomes" id="UP000000600">
    <property type="component" value="Partially assembled WGS sequence"/>
</dbReference>
<dbReference type="GO" id="GO:0005615">
    <property type="term" value="C:extracellular space"/>
    <property type="evidence" value="ECO:0000318"/>
    <property type="project" value="GO_Central"/>
</dbReference>
<dbReference type="GO" id="GO:0005764">
    <property type="term" value="C:lysosome"/>
    <property type="evidence" value="ECO:0000318"/>
    <property type="project" value="GO_Central"/>
</dbReference>
<dbReference type="GO" id="GO:0004197">
    <property type="term" value="F:cysteine-type endopeptidase activity"/>
    <property type="evidence" value="ECO:0000318"/>
    <property type="project" value="GO_Central"/>
</dbReference>
<dbReference type="GO" id="GO:0051603">
    <property type="term" value="P:proteolysis involved in protein catabolic process"/>
    <property type="evidence" value="ECO:0000318"/>
    <property type="project" value="GO_Central"/>
</dbReference>
<dbReference type="CDD" id="cd02248">
    <property type="entry name" value="Peptidase_C1A"/>
    <property type="match status" value="1"/>
</dbReference>
<dbReference type="FunFam" id="3.90.70.10:FF:000104">
    <property type="entry name" value="Cathepsin L 1"/>
    <property type="match status" value="1"/>
</dbReference>
<dbReference type="Gene3D" id="3.90.70.10">
    <property type="entry name" value="Cysteine proteinases"/>
    <property type="match status" value="1"/>
</dbReference>
<dbReference type="InterPro" id="IPR038765">
    <property type="entry name" value="Papain-like_cys_pep_sf"/>
</dbReference>
<dbReference type="InterPro" id="IPR000169">
    <property type="entry name" value="Pept_cys_AS"/>
</dbReference>
<dbReference type="InterPro" id="IPR013128">
    <property type="entry name" value="Peptidase_C1A"/>
</dbReference>
<dbReference type="InterPro" id="IPR000668">
    <property type="entry name" value="Peptidase_C1A_C"/>
</dbReference>
<dbReference type="InterPro" id="IPR039417">
    <property type="entry name" value="Peptidase_C1A_papain-like"/>
</dbReference>
<dbReference type="InterPro" id="IPR013201">
    <property type="entry name" value="Prot_inhib_I29"/>
</dbReference>
<dbReference type="PANTHER" id="PTHR12411">
    <property type="entry name" value="CYSTEINE PROTEASE FAMILY C1-RELATED"/>
    <property type="match status" value="1"/>
</dbReference>
<dbReference type="Pfam" id="PF08246">
    <property type="entry name" value="Inhibitor_I29"/>
    <property type="match status" value="1"/>
</dbReference>
<dbReference type="Pfam" id="PF00112">
    <property type="entry name" value="Peptidase_C1"/>
    <property type="match status" value="1"/>
</dbReference>
<dbReference type="PRINTS" id="PR00705">
    <property type="entry name" value="PAPAIN"/>
</dbReference>
<dbReference type="SMART" id="SM00848">
    <property type="entry name" value="Inhibitor_I29"/>
    <property type="match status" value="1"/>
</dbReference>
<dbReference type="SMART" id="SM00645">
    <property type="entry name" value="Pept_C1"/>
    <property type="match status" value="1"/>
</dbReference>
<dbReference type="SUPFAM" id="SSF54001">
    <property type="entry name" value="Cysteine proteinases"/>
    <property type="match status" value="1"/>
</dbReference>
<dbReference type="PROSITE" id="PS00139">
    <property type="entry name" value="THIOL_PROTEASE_CYS"/>
    <property type="match status" value="1"/>
</dbReference>
<keyword id="KW-1015">Disulfide bond</keyword>
<keyword id="KW-0378">Hydrolase</keyword>
<keyword id="KW-0645">Protease</keyword>
<keyword id="KW-1185">Reference proteome</keyword>
<keyword id="KW-0964">Secreted</keyword>
<keyword id="KW-0732">Signal</keyword>
<keyword id="KW-0788">Thiol protease</keyword>
<keyword id="KW-0865">Zymogen</keyword>
<proteinExistence type="inferred from homology"/>
<evidence type="ECO:0000250" key="1"/>
<evidence type="ECO:0000255" key="2"/>
<evidence type="ECO:0000255" key="3">
    <source>
        <dbReference type="PROSITE-ProRule" id="PRU10088"/>
    </source>
</evidence>
<evidence type="ECO:0000305" key="4"/>
<gene>
    <name type="ORF">GSPATT00022898001</name>
</gene>
<name>CATL2_PARTE</name>